<reference key="1">
    <citation type="journal article" date="1999" name="Nature">
        <title>Genomic sequence comparison of two unrelated isolates of the human gastric pathogen Helicobacter pylori.</title>
        <authorList>
            <person name="Alm R.A."/>
            <person name="Ling L.-S.L."/>
            <person name="Moir D.T."/>
            <person name="King B.L."/>
            <person name="Brown E.D."/>
            <person name="Doig P.C."/>
            <person name="Smith D.R."/>
            <person name="Noonan B."/>
            <person name="Guild B.C."/>
            <person name="deJonge B.L."/>
            <person name="Carmel G."/>
            <person name="Tummino P.J."/>
            <person name="Caruso A."/>
            <person name="Uria-Nickelsen M."/>
            <person name="Mills D.M."/>
            <person name="Ives C."/>
            <person name="Gibson R."/>
            <person name="Merberg D."/>
            <person name="Mills S.D."/>
            <person name="Jiang Q."/>
            <person name="Taylor D.E."/>
            <person name="Vovis G.F."/>
            <person name="Trust T.J."/>
        </authorList>
    </citation>
    <scope>NUCLEOTIDE SEQUENCE [LARGE SCALE GENOMIC DNA]</scope>
    <source>
        <strain>J99 / ATCC 700824</strain>
    </source>
</reference>
<evidence type="ECO:0000255" key="1">
    <source>
        <dbReference type="HAMAP-Rule" id="MF_00379"/>
    </source>
</evidence>
<name>MNME_HELPJ</name>
<gene>
    <name evidence="1" type="primary">mnmE</name>
    <name evidence="1" type="synonym">thdF</name>
    <name evidence="1" type="synonym">trmE</name>
    <name type="ordered locus">jhp_1345</name>
</gene>
<keyword id="KW-0963">Cytoplasm</keyword>
<keyword id="KW-0342">GTP-binding</keyword>
<keyword id="KW-0378">Hydrolase</keyword>
<keyword id="KW-0460">Magnesium</keyword>
<keyword id="KW-0479">Metal-binding</keyword>
<keyword id="KW-0547">Nucleotide-binding</keyword>
<keyword id="KW-0630">Potassium</keyword>
<keyword id="KW-0819">tRNA processing</keyword>
<feature type="chain" id="PRO_0000188883" description="tRNA modification GTPase MnmE">
    <location>
        <begin position="1"/>
        <end position="461"/>
    </location>
</feature>
<feature type="domain" description="TrmE-type G">
    <location>
        <begin position="224"/>
        <end position="387"/>
    </location>
</feature>
<feature type="binding site" evidence="1">
    <location>
        <position position="32"/>
    </location>
    <ligand>
        <name>(6S)-5-formyl-5,6,7,8-tetrahydrofolate</name>
        <dbReference type="ChEBI" id="CHEBI:57457"/>
    </ligand>
</feature>
<feature type="binding site" evidence="1">
    <location>
        <position position="89"/>
    </location>
    <ligand>
        <name>(6S)-5-formyl-5,6,7,8-tetrahydrofolate</name>
        <dbReference type="ChEBI" id="CHEBI:57457"/>
    </ligand>
</feature>
<feature type="binding site" evidence="1">
    <location>
        <position position="128"/>
    </location>
    <ligand>
        <name>(6S)-5-formyl-5,6,7,8-tetrahydrofolate</name>
        <dbReference type="ChEBI" id="CHEBI:57457"/>
    </ligand>
</feature>
<feature type="binding site" evidence="1">
    <location>
        <begin position="234"/>
        <end position="239"/>
    </location>
    <ligand>
        <name>GTP</name>
        <dbReference type="ChEBI" id="CHEBI:37565"/>
    </ligand>
</feature>
<feature type="binding site" evidence="1">
    <location>
        <position position="234"/>
    </location>
    <ligand>
        <name>K(+)</name>
        <dbReference type="ChEBI" id="CHEBI:29103"/>
    </ligand>
</feature>
<feature type="binding site" evidence="1">
    <location>
        <position position="238"/>
    </location>
    <ligand>
        <name>Mg(2+)</name>
        <dbReference type="ChEBI" id="CHEBI:18420"/>
    </ligand>
</feature>
<feature type="binding site" evidence="1">
    <location>
        <begin position="253"/>
        <end position="259"/>
    </location>
    <ligand>
        <name>GTP</name>
        <dbReference type="ChEBI" id="CHEBI:37565"/>
    </ligand>
</feature>
<feature type="binding site" evidence="1">
    <location>
        <position position="253"/>
    </location>
    <ligand>
        <name>K(+)</name>
        <dbReference type="ChEBI" id="CHEBI:29103"/>
    </ligand>
</feature>
<feature type="binding site" evidence="1">
    <location>
        <position position="255"/>
    </location>
    <ligand>
        <name>K(+)</name>
        <dbReference type="ChEBI" id="CHEBI:29103"/>
    </ligand>
</feature>
<feature type="binding site" evidence="1">
    <location>
        <position position="258"/>
    </location>
    <ligand>
        <name>K(+)</name>
        <dbReference type="ChEBI" id="CHEBI:29103"/>
    </ligand>
</feature>
<feature type="binding site" evidence="1">
    <location>
        <position position="259"/>
    </location>
    <ligand>
        <name>Mg(2+)</name>
        <dbReference type="ChEBI" id="CHEBI:18420"/>
    </ligand>
</feature>
<feature type="binding site" evidence="1">
    <location>
        <begin position="278"/>
        <end position="281"/>
    </location>
    <ligand>
        <name>GTP</name>
        <dbReference type="ChEBI" id="CHEBI:37565"/>
    </ligand>
</feature>
<feature type="binding site" evidence="1">
    <location>
        <position position="461"/>
    </location>
    <ligand>
        <name>(6S)-5-formyl-5,6,7,8-tetrahydrofolate</name>
        <dbReference type="ChEBI" id="CHEBI:57457"/>
    </ligand>
</feature>
<proteinExistence type="inferred from homology"/>
<comment type="function">
    <text evidence="1">Exhibits a very high intrinsic GTPase hydrolysis rate. Involved in the addition of a carboxymethylaminomethyl (cmnm) group at the wobble position (U34) of certain tRNAs, forming tRNA-cmnm(5)s(2)U34.</text>
</comment>
<comment type="cofactor">
    <cofactor evidence="1">
        <name>K(+)</name>
        <dbReference type="ChEBI" id="CHEBI:29103"/>
    </cofactor>
    <text evidence="1">Binds 1 potassium ion per subunit.</text>
</comment>
<comment type="subunit">
    <text evidence="1">Homodimer. Heterotetramer of two MnmE and two MnmG subunits.</text>
</comment>
<comment type="subcellular location">
    <subcellularLocation>
        <location evidence="1">Cytoplasm</location>
    </subcellularLocation>
</comment>
<comment type="similarity">
    <text evidence="1">Belongs to the TRAFAC class TrmE-Era-EngA-EngB-Septin-like GTPase superfamily. TrmE GTPase family.</text>
</comment>
<sequence>MKNTSSSTTLTMNDTIAAIATPLGKGAISIIKISGHNALNILKQLTQKQDFTPRYAYVCDIFSDGVLLDKALVIYFKAPYSFTGEDVCEIQCHGSPLLAQNILQACLNLGARLAKAGEFSKKAFLNHKMDLSEIEASVQLILCEDESVLNALARQLKGELKIFIEEARNNLLKLLASSEVLIDYSEEDIPSDFLKEVSFNLEKQIASFKDLLDFSNAQKQRNKGHALSIVGKPNAGKSSLLNAMLLEERALVSDIKGTTRDTIEEVIELKGHKVRLIDTAGIRESADEIERLGIEKSLKSLENCDIILGVFDLSKPLEKEDFNLMDTLNRTKKPCIVVLNKNDLAPKLELEILKSYLKIPYSILETNTLNSKACLKDLSQKISEFFPKLDTQNKLLLTSLAQTTALENAITELQNAKSHLDTLELFSYHILSAIENLNLLTRPYETSQMLDSMFSEFCLGK</sequence>
<protein>
    <recommendedName>
        <fullName evidence="1">tRNA modification GTPase MnmE</fullName>
        <ecNumber evidence="1">3.6.-.-</ecNumber>
    </recommendedName>
</protein>
<accession>Q9ZJG6</accession>
<organism>
    <name type="scientific">Helicobacter pylori (strain J99 / ATCC 700824)</name>
    <name type="common">Campylobacter pylori J99</name>
    <dbReference type="NCBI Taxonomy" id="85963"/>
    <lineage>
        <taxon>Bacteria</taxon>
        <taxon>Pseudomonadati</taxon>
        <taxon>Campylobacterota</taxon>
        <taxon>Epsilonproteobacteria</taxon>
        <taxon>Campylobacterales</taxon>
        <taxon>Helicobacteraceae</taxon>
        <taxon>Helicobacter</taxon>
    </lineage>
</organism>
<dbReference type="EC" id="3.6.-.-" evidence="1"/>
<dbReference type="EMBL" id="AE001439">
    <property type="protein sequence ID" value="AAD06922.1"/>
    <property type="molecule type" value="Genomic_DNA"/>
</dbReference>
<dbReference type="PIR" id="G71818">
    <property type="entry name" value="G71818"/>
</dbReference>
<dbReference type="SMR" id="Q9ZJG6"/>
<dbReference type="KEGG" id="hpj:jhp_1345"/>
<dbReference type="eggNOG" id="COG0486">
    <property type="taxonomic scope" value="Bacteria"/>
</dbReference>
<dbReference type="Proteomes" id="UP000000804">
    <property type="component" value="Chromosome"/>
</dbReference>
<dbReference type="GO" id="GO:0005829">
    <property type="term" value="C:cytosol"/>
    <property type="evidence" value="ECO:0007669"/>
    <property type="project" value="TreeGrafter"/>
</dbReference>
<dbReference type="GO" id="GO:0005525">
    <property type="term" value="F:GTP binding"/>
    <property type="evidence" value="ECO:0007669"/>
    <property type="project" value="UniProtKB-UniRule"/>
</dbReference>
<dbReference type="GO" id="GO:0003924">
    <property type="term" value="F:GTPase activity"/>
    <property type="evidence" value="ECO:0007669"/>
    <property type="project" value="UniProtKB-UniRule"/>
</dbReference>
<dbReference type="GO" id="GO:0046872">
    <property type="term" value="F:metal ion binding"/>
    <property type="evidence" value="ECO:0007669"/>
    <property type="project" value="UniProtKB-KW"/>
</dbReference>
<dbReference type="GO" id="GO:0030488">
    <property type="term" value="P:tRNA methylation"/>
    <property type="evidence" value="ECO:0007669"/>
    <property type="project" value="TreeGrafter"/>
</dbReference>
<dbReference type="GO" id="GO:0002098">
    <property type="term" value="P:tRNA wobble uridine modification"/>
    <property type="evidence" value="ECO:0007669"/>
    <property type="project" value="TreeGrafter"/>
</dbReference>
<dbReference type="CDD" id="cd04164">
    <property type="entry name" value="trmE"/>
    <property type="match status" value="1"/>
</dbReference>
<dbReference type="CDD" id="cd14858">
    <property type="entry name" value="TrmE_N"/>
    <property type="match status" value="1"/>
</dbReference>
<dbReference type="FunFam" id="3.30.1360.120:FF:000003">
    <property type="entry name" value="tRNA modification GTPase MnmE"/>
    <property type="match status" value="1"/>
</dbReference>
<dbReference type="FunFam" id="3.40.50.300:FF:001376">
    <property type="entry name" value="tRNA modification GTPase MnmE"/>
    <property type="match status" value="1"/>
</dbReference>
<dbReference type="Gene3D" id="3.40.50.300">
    <property type="entry name" value="P-loop containing nucleotide triphosphate hydrolases"/>
    <property type="match status" value="1"/>
</dbReference>
<dbReference type="Gene3D" id="3.30.1360.120">
    <property type="entry name" value="Probable tRNA modification gtpase trme, domain 1"/>
    <property type="match status" value="1"/>
</dbReference>
<dbReference type="Gene3D" id="1.20.120.430">
    <property type="entry name" value="tRNA modification GTPase MnmE domain 2"/>
    <property type="match status" value="1"/>
</dbReference>
<dbReference type="HAMAP" id="MF_00379">
    <property type="entry name" value="GTPase_MnmE"/>
    <property type="match status" value="1"/>
</dbReference>
<dbReference type="InterPro" id="IPR031168">
    <property type="entry name" value="G_TrmE"/>
</dbReference>
<dbReference type="InterPro" id="IPR006073">
    <property type="entry name" value="GTP-bd"/>
</dbReference>
<dbReference type="InterPro" id="IPR018948">
    <property type="entry name" value="GTP-bd_TrmE_N"/>
</dbReference>
<dbReference type="InterPro" id="IPR004520">
    <property type="entry name" value="GTPase_MnmE"/>
</dbReference>
<dbReference type="InterPro" id="IPR027368">
    <property type="entry name" value="MnmE_dom2"/>
</dbReference>
<dbReference type="InterPro" id="IPR025867">
    <property type="entry name" value="MnmE_helical"/>
</dbReference>
<dbReference type="InterPro" id="IPR027417">
    <property type="entry name" value="P-loop_NTPase"/>
</dbReference>
<dbReference type="InterPro" id="IPR005225">
    <property type="entry name" value="Small_GTP-bd"/>
</dbReference>
<dbReference type="InterPro" id="IPR027266">
    <property type="entry name" value="TrmE/GcvT_dom1"/>
</dbReference>
<dbReference type="NCBIfam" id="TIGR00450">
    <property type="entry name" value="mnmE_trmE_thdF"/>
    <property type="match status" value="1"/>
</dbReference>
<dbReference type="NCBIfam" id="TIGR00231">
    <property type="entry name" value="small_GTP"/>
    <property type="match status" value="1"/>
</dbReference>
<dbReference type="PANTHER" id="PTHR42714">
    <property type="entry name" value="TRNA MODIFICATION GTPASE GTPBP3"/>
    <property type="match status" value="1"/>
</dbReference>
<dbReference type="PANTHER" id="PTHR42714:SF2">
    <property type="entry name" value="TRNA MODIFICATION GTPASE GTPBP3, MITOCHONDRIAL"/>
    <property type="match status" value="1"/>
</dbReference>
<dbReference type="Pfam" id="PF01926">
    <property type="entry name" value="MMR_HSR1"/>
    <property type="match status" value="1"/>
</dbReference>
<dbReference type="Pfam" id="PF12631">
    <property type="entry name" value="MnmE_helical"/>
    <property type="match status" value="1"/>
</dbReference>
<dbReference type="Pfam" id="PF10396">
    <property type="entry name" value="TrmE_N"/>
    <property type="match status" value="1"/>
</dbReference>
<dbReference type="PRINTS" id="PR00326">
    <property type="entry name" value="GTP1OBG"/>
</dbReference>
<dbReference type="SUPFAM" id="SSF52540">
    <property type="entry name" value="P-loop containing nucleoside triphosphate hydrolases"/>
    <property type="match status" value="1"/>
</dbReference>
<dbReference type="PROSITE" id="PS51709">
    <property type="entry name" value="G_TRME"/>
    <property type="match status" value="1"/>
</dbReference>